<evidence type="ECO:0000250" key="1">
    <source>
        <dbReference type="UniProtKB" id="P33371"/>
    </source>
</evidence>
<evidence type="ECO:0000250" key="2">
    <source>
        <dbReference type="UniProtKB" id="Q5SMC7"/>
    </source>
</evidence>
<evidence type="ECO:0000305" key="3"/>
<feature type="chain" id="PRO_0000427075" description="Probable tRNA-dihydrouridine synthase">
    <location>
        <begin position="1"/>
        <end position="389"/>
    </location>
</feature>
<feature type="active site" description="Proton donor" evidence="2">
    <location>
        <position position="120"/>
    </location>
</feature>
<feature type="binding site" evidence="1">
    <location>
        <begin position="28"/>
        <end position="30"/>
    </location>
    <ligand>
        <name>FMN</name>
        <dbReference type="ChEBI" id="CHEBI:58210"/>
    </ligand>
</feature>
<feature type="binding site" evidence="1">
    <location>
        <position position="89"/>
    </location>
    <ligand>
        <name>FMN</name>
        <dbReference type="ChEBI" id="CHEBI:58210"/>
    </ligand>
</feature>
<feature type="binding site" evidence="1">
    <location>
        <position position="162"/>
    </location>
    <ligand>
        <name>FMN</name>
        <dbReference type="ChEBI" id="CHEBI:58210"/>
    </ligand>
</feature>
<feature type="binding site" evidence="1">
    <location>
        <begin position="224"/>
        <end position="226"/>
    </location>
    <ligand>
        <name>FMN</name>
        <dbReference type="ChEBI" id="CHEBI:58210"/>
    </ligand>
</feature>
<feature type="binding site" evidence="1">
    <location>
        <begin position="248"/>
        <end position="249"/>
    </location>
    <ligand>
        <name>FMN</name>
        <dbReference type="ChEBI" id="CHEBI:58210"/>
    </ligand>
</feature>
<dbReference type="EC" id="1.3.1.-"/>
<dbReference type="EMBL" id="AE000516">
    <property type="protein sequence ID" value="AAK45087.1"/>
    <property type="molecule type" value="Genomic_DNA"/>
</dbReference>
<dbReference type="PIR" id="G70810">
    <property type="entry name" value="G70810"/>
</dbReference>
<dbReference type="SMR" id="P9WNS6"/>
<dbReference type="KEGG" id="mtc:MT0845"/>
<dbReference type="PATRIC" id="fig|83331.31.peg.904"/>
<dbReference type="HOGENOM" id="CLU_013299_0_0_11"/>
<dbReference type="Proteomes" id="UP000001020">
    <property type="component" value="Chromosome"/>
</dbReference>
<dbReference type="GO" id="GO:0050660">
    <property type="term" value="F:flavin adenine dinucleotide binding"/>
    <property type="evidence" value="ECO:0007669"/>
    <property type="project" value="InterPro"/>
</dbReference>
<dbReference type="GO" id="GO:0000049">
    <property type="term" value="F:tRNA binding"/>
    <property type="evidence" value="ECO:0007669"/>
    <property type="project" value="UniProtKB-KW"/>
</dbReference>
<dbReference type="GO" id="GO:0017150">
    <property type="term" value="F:tRNA dihydrouridine synthase activity"/>
    <property type="evidence" value="ECO:0007669"/>
    <property type="project" value="InterPro"/>
</dbReference>
<dbReference type="CDD" id="cd02801">
    <property type="entry name" value="DUS_like_FMN"/>
    <property type="match status" value="1"/>
</dbReference>
<dbReference type="FunFam" id="1.10.1200.80:FF:000003">
    <property type="entry name" value="tRNA-dihydrouridine synthase"/>
    <property type="match status" value="1"/>
</dbReference>
<dbReference type="FunFam" id="3.20.20.70:FF:000099">
    <property type="entry name" value="tRNA-dihydrouridine synthase"/>
    <property type="match status" value="1"/>
</dbReference>
<dbReference type="Gene3D" id="3.20.20.70">
    <property type="entry name" value="Aldolase class I"/>
    <property type="match status" value="1"/>
</dbReference>
<dbReference type="Gene3D" id="1.10.1200.80">
    <property type="entry name" value="Putative flavin oxidoreducatase, domain 2"/>
    <property type="match status" value="1"/>
</dbReference>
<dbReference type="InterPro" id="IPR013785">
    <property type="entry name" value="Aldolase_TIM"/>
</dbReference>
<dbReference type="InterPro" id="IPR035587">
    <property type="entry name" value="DUS-like_FMN-bd"/>
</dbReference>
<dbReference type="InterPro" id="IPR001269">
    <property type="entry name" value="DUS_fam"/>
</dbReference>
<dbReference type="InterPro" id="IPR004652">
    <property type="entry name" value="DusB-like"/>
</dbReference>
<dbReference type="InterPro" id="IPR024036">
    <property type="entry name" value="tRNA-dHydroUridine_Synthase_C"/>
</dbReference>
<dbReference type="InterPro" id="IPR018517">
    <property type="entry name" value="tRNA_hU_synthase_CS"/>
</dbReference>
<dbReference type="NCBIfam" id="TIGR00737">
    <property type="entry name" value="nifR3_yhdG"/>
    <property type="match status" value="1"/>
</dbReference>
<dbReference type="PANTHER" id="PTHR45846">
    <property type="entry name" value="TRNA-DIHYDROURIDINE(47) SYNTHASE [NAD(P)(+)]-LIKE"/>
    <property type="match status" value="1"/>
</dbReference>
<dbReference type="PANTHER" id="PTHR45846:SF1">
    <property type="entry name" value="TRNA-DIHYDROURIDINE(47) SYNTHASE [NAD(P)(+)]-LIKE"/>
    <property type="match status" value="1"/>
</dbReference>
<dbReference type="Pfam" id="PF01207">
    <property type="entry name" value="Dus"/>
    <property type="match status" value="1"/>
</dbReference>
<dbReference type="PIRSF" id="PIRSF006621">
    <property type="entry name" value="Dus"/>
    <property type="match status" value="1"/>
</dbReference>
<dbReference type="SUPFAM" id="SSF51395">
    <property type="entry name" value="FMN-linked oxidoreductases"/>
    <property type="match status" value="1"/>
</dbReference>
<dbReference type="PROSITE" id="PS01136">
    <property type="entry name" value="UPF0034"/>
    <property type="match status" value="1"/>
</dbReference>
<proteinExistence type="inferred from homology"/>
<comment type="function">
    <text evidence="1">Catalyzes the synthesis of 5,6-dihydrouridine (D), a modified base found in the D-loop of most tRNAs, via the reduction of the C5-C6 double bond in target uridines.</text>
</comment>
<comment type="catalytic activity">
    <reaction evidence="1">
        <text>a 5,6-dihydrouridine in tRNA + NAD(+) = a uridine in tRNA + NADH + H(+)</text>
        <dbReference type="Rhea" id="RHEA:54452"/>
        <dbReference type="Rhea" id="RHEA-COMP:13339"/>
        <dbReference type="Rhea" id="RHEA-COMP:13887"/>
        <dbReference type="ChEBI" id="CHEBI:15378"/>
        <dbReference type="ChEBI" id="CHEBI:57540"/>
        <dbReference type="ChEBI" id="CHEBI:57945"/>
        <dbReference type="ChEBI" id="CHEBI:65315"/>
        <dbReference type="ChEBI" id="CHEBI:74443"/>
    </reaction>
</comment>
<comment type="catalytic activity">
    <reaction evidence="1">
        <text>a 5,6-dihydrouridine in tRNA + NADP(+) = a uridine in tRNA + NADPH + H(+)</text>
        <dbReference type="Rhea" id="RHEA:23624"/>
        <dbReference type="Rhea" id="RHEA-COMP:13339"/>
        <dbReference type="Rhea" id="RHEA-COMP:13887"/>
        <dbReference type="ChEBI" id="CHEBI:15378"/>
        <dbReference type="ChEBI" id="CHEBI:57783"/>
        <dbReference type="ChEBI" id="CHEBI:58349"/>
        <dbReference type="ChEBI" id="CHEBI:65315"/>
        <dbReference type="ChEBI" id="CHEBI:74443"/>
    </reaction>
</comment>
<comment type="cofactor">
    <cofactor evidence="1">
        <name>FMN</name>
        <dbReference type="ChEBI" id="CHEBI:58210"/>
    </cofactor>
</comment>
<comment type="similarity">
    <text evidence="3">Belongs to the Dus family.</text>
</comment>
<accession>P9WNS6</accession>
<accession>L0T506</accession>
<accession>O53835</accession>
<reference key="1">
    <citation type="journal article" date="2002" name="J. Bacteriol.">
        <title>Whole-genome comparison of Mycobacterium tuberculosis clinical and laboratory strains.</title>
        <authorList>
            <person name="Fleischmann R.D."/>
            <person name="Alland D."/>
            <person name="Eisen J.A."/>
            <person name="Carpenter L."/>
            <person name="White O."/>
            <person name="Peterson J.D."/>
            <person name="DeBoy R.T."/>
            <person name="Dodson R.J."/>
            <person name="Gwinn M.L."/>
            <person name="Haft D.H."/>
            <person name="Hickey E.K."/>
            <person name="Kolonay J.F."/>
            <person name="Nelson W.C."/>
            <person name="Umayam L.A."/>
            <person name="Ermolaeva M.D."/>
            <person name="Salzberg S.L."/>
            <person name="Delcher A."/>
            <person name="Utterback T.R."/>
            <person name="Weidman J.F."/>
            <person name="Khouri H.M."/>
            <person name="Gill J."/>
            <person name="Mikula A."/>
            <person name="Bishai W."/>
            <person name="Jacobs W.R. Jr."/>
            <person name="Venter J.C."/>
            <person name="Fraser C.M."/>
        </authorList>
    </citation>
    <scope>NUCLEOTIDE SEQUENCE [LARGE SCALE GENOMIC DNA]</scope>
    <source>
        <strain>CDC 1551 / Oshkosh</strain>
    </source>
</reference>
<sequence>MSRRRAIQPSPALRIGPIELASPVVLAPMAGVTNVAFRALCRQLEQSKVGTVSGLYVCEMVTARALIERHPVTMHMTTFSADESPRSLQLYTVDPDTTYAAARMIAGEGLADHIDMNFGCPVPKVTKRGGGAALPFKRRLFGQIVAAAVRATEGTDIPVTVKFRIGIDDAHHTHLDAGRIAEAEGAAAVALHARTAAQRYSGTADWEQIARLKQHVRTIPVLGNGDIYDAGDALAMMSTTGCDGVVIGRGCLGRPWLFAELSAAFTGSPAPTPPTLGEVADIIRRHGTLLAAHFGEDKGMRDIRKHIAWYLHGFPAGSALRRALAMVKTFDELDCLLDRLDGTVPFPDSATGARGRQGSPARVALPDGWLTDPDDCRVPEGADAMGSGG</sequence>
<keyword id="KW-0285">Flavoprotein</keyword>
<keyword id="KW-0288">FMN</keyword>
<keyword id="KW-0521">NADP</keyword>
<keyword id="KW-0560">Oxidoreductase</keyword>
<keyword id="KW-1185">Reference proteome</keyword>
<keyword id="KW-0694">RNA-binding</keyword>
<keyword id="KW-0819">tRNA processing</keyword>
<keyword id="KW-0820">tRNA-binding</keyword>
<protein>
    <recommendedName>
        <fullName>Probable tRNA-dihydrouridine synthase</fullName>
        <ecNumber>1.3.1.-</ecNumber>
    </recommendedName>
</protein>
<name>DUS_MYCTO</name>
<gene>
    <name type="primary">dus</name>
    <name type="ordered locus">MT0845</name>
</gene>
<organism>
    <name type="scientific">Mycobacterium tuberculosis (strain CDC 1551 / Oshkosh)</name>
    <dbReference type="NCBI Taxonomy" id="83331"/>
    <lineage>
        <taxon>Bacteria</taxon>
        <taxon>Bacillati</taxon>
        <taxon>Actinomycetota</taxon>
        <taxon>Actinomycetes</taxon>
        <taxon>Mycobacteriales</taxon>
        <taxon>Mycobacteriaceae</taxon>
        <taxon>Mycobacterium</taxon>
        <taxon>Mycobacterium tuberculosis complex</taxon>
    </lineage>
</organism>